<gene>
    <name type="primary">yvcJ</name>
    <name type="ordered locus">BSU34770</name>
</gene>
<name>YVCJ_BACSU</name>
<evidence type="ECO:0000255" key="1">
    <source>
        <dbReference type="HAMAP-Rule" id="MF_00636"/>
    </source>
</evidence>
<evidence type="ECO:0000269" key="2">
    <source>
    </source>
</evidence>
<organism>
    <name type="scientific">Bacillus subtilis (strain 168)</name>
    <dbReference type="NCBI Taxonomy" id="224308"/>
    <lineage>
        <taxon>Bacteria</taxon>
        <taxon>Bacillati</taxon>
        <taxon>Bacillota</taxon>
        <taxon>Bacilli</taxon>
        <taxon>Bacillales</taxon>
        <taxon>Bacillaceae</taxon>
        <taxon>Bacillus</taxon>
    </lineage>
</organism>
<comment type="function">
    <text evidence="2">Displays ATPase and GTPase activities. Can also hydrolyze pNPP. May affect the expression of competence via the phosphorylation of a cellular component.</text>
</comment>
<comment type="biophysicochemical properties">
    <kinetics>
        <text evidence="2">GTP is hydrolyzed with a 2-fold higher efficiency than ATP.</text>
    </kinetics>
</comment>
<comment type="disruption phenotype">
    <text evidence="2">Cells lacking this gene show a reduction in transformation efficiency and in fraction of cells that express competence.</text>
</comment>
<comment type="similarity">
    <text evidence="1">Belongs to the RapZ-like family.</text>
</comment>
<sequence>MSVSESHDIQLVIITGMSGAGKTVAIQSFEDLGYFCVDNLPPSLLPKFLELMKESNSKMSKVALVMDLRGREFFDRLIEALDEMAENPWITPRILFLDAKDSILVTRYKETRRSHPLAATGLPLEGIALERELLEELKGRSQIIYDTSDMKPRDLREKIVKHFATNQGETFTVNVMSFGFKYGIPIDADLVFDVRFLPNPYYIESMRPLTGKDKEVSSYVMKWNETQKFNEKLIDLLSFMLPSYKREGKSQVVIAIGCTGGQHRSVTLAENLADYFKKDYYTHVTHRDIEKRSRK</sequence>
<protein>
    <recommendedName>
        <fullName evidence="1">Nucleotide-binding protein YvcJ</fullName>
    </recommendedName>
</protein>
<dbReference type="EMBL" id="Z94043">
    <property type="protein sequence ID" value="CAB08057.1"/>
    <property type="molecule type" value="Genomic_DNA"/>
</dbReference>
<dbReference type="EMBL" id="AL009126">
    <property type="protein sequence ID" value="CAB15482.1"/>
    <property type="molecule type" value="Genomic_DNA"/>
</dbReference>
<dbReference type="PIR" id="H70031">
    <property type="entry name" value="H70031"/>
</dbReference>
<dbReference type="RefSeq" id="NP_391357.1">
    <property type="nucleotide sequence ID" value="NC_000964.3"/>
</dbReference>
<dbReference type="SMR" id="O06973"/>
<dbReference type="FunCoup" id="O06973">
    <property type="interactions" value="208"/>
</dbReference>
<dbReference type="IntAct" id="O06973">
    <property type="interactions" value="2"/>
</dbReference>
<dbReference type="STRING" id="224308.BSU34770"/>
<dbReference type="jPOST" id="O06973"/>
<dbReference type="PaxDb" id="224308-BSU34770"/>
<dbReference type="EnsemblBacteria" id="CAB15482">
    <property type="protein sequence ID" value="CAB15482"/>
    <property type="gene ID" value="BSU_34770"/>
</dbReference>
<dbReference type="GeneID" id="936532"/>
<dbReference type="KEGG" id="bsu:BSU34770"/>
<dbReference type="PATRIC" id="fig|224308.179.peg.3765"/>
<dbReference type="eggNOG" id="COG1660">
    <property type="taxonomic scope" value="Bacteria"/>
</dbReference>
<dbReference type="InParanoid" id="O06973"/>
<dbReference type="OrthoDB" id="9784461at2"/>
<dbReference type="PhylomeDB" id="O06973"/>
<dbReference type="BioCyc" id="BSUB:BSU34770-MONOMER"/>
<dbReference type="Proteomes" id="UP000001570">
    <property type="component" value="Chromosome"/>
</dbReference>
<dbReference type="GO" id="GO:0005524">
    <property type="term" value="F:ATP binding"/>
    <property type="evidence" value="ECO:0007669"/>
    <property type="project" value="UniProtKB-UniRule"/>
</dbReference>
<dbReference type="GO" id="GO:0005525">
    <property type="term" value="F:GTP binding"/>
    <property type="evidence" value="ECO:0007669"/>
    <property type="project" value="UniProtKB-UniRule"/>
</dbReference>
<dbReference type="GO" id="GO:0060090">
    <property type="term" value="F:molecular adaptor activity"/>
    <property type="evidence" value="ECO:0000318"/>
    <property type="project" value="GO_Central"/>
</dbReference>
<dbReference type="HAMAP" id="MF_00636">
    <property type="entry name" value="RapZ_like"/>
    <property type="match status" value="1"/>
</dbReference>
<dbReference type="InterPro" id="IPR027417">
    <property type="entry name" value="P-loop_NTPase"/>
</dbReference>
<dbReference type="InterPro" id="IPR005337">
    <property type="entry name" value="RapZ-like"/>
</dbReference>
<dbReference type="InterPro" id="IPR053930">
    <property type="entry name" value="RapZ-like_N"/>
</dbReference>
<dbReference type="InterPro" id="IPR053931">
    <property type="entry name" value="RapZ_C"/>
</dbReference>
<dbReference type="NCBIfam" id="NF003828">
    <property type="entry name" value="PRK05416.1"/>
    <property type="match status" value="1"/>
</dbReference>
<dbReference type="PANTHER" id="PTHR30448">
    <property type="entry name" value="RNASE ADAPTER PROTEIN RAPZ"/>
    <property type="match status" value="1"/>
</dbReference>
<dbReference type="PANTHER" id="PTHR30448:SF0">
    <property type="entry name" value="RNASE ADAPTER PROTEIN RAPZ"/>
    <property type="match status" value="1"/>
</dbReference>
<dbReference type="Pfam" id="PF22740">
    <property type="entry name" value="PapZ_C"/>
    <property type="match status" value="1"/>
</dbReference>
<dbReference type="Pfam" id="PF03668">
    <property type="entry name" value="RapZ-like_N"/>
    <property type="match status" value="1"/>
</dbReference>
<dbReference type="PIRSF" id="PIRSF005052">
    <property type="entry name" value="P-loopkin"/>
    <property type="match status" value="1"/>
</dbReference>
<dbReference type="SUPFAM" id="SSF52540">
    <property type="entry name" value="P-loop containing nucleoside triphosphate hydrolases"/>
    <property type="match status" value="1"/>
</dbReference>
<keyword id="KW-0067">ATP-binding</keyword>
<keyword id="KW-0342">GTP-binding</keyword>
<keyword id="KW-0547">Nucleotide-binding</keyword>
<keyword id="KW-1185">Reference proteome</keyword>
<proteinExistence type="evidence at protein level"/>
<reference key="1">
    <citation type="submission" date="1997-04" db="EMBL/GenBank/DDBJ databases">
        <authorList>
            <person name="Denizot F."/>
        </authorList>
    </citation>
    <scope>NUCLEOTIDE SEQUENCE [GENOMIC DNA]</scope>
    <source>
        <strain>168</strain>
    </source>
</reference>
<reference key="2">
    <citation type="journal article" date="1997" name="Nature">
        <title>The complete genome sequence of the Gram-positive bacterium Bacillus subtilis.</title>
        <authorList>
            <person name="Kunst F."/>
            <person name="Ogasawara N."/>
            <person name="Moszer I."/>
            <person name="Albertini A.M."/>
            <person name="Alloni G."/>
            <person name="Azevedo V."/>
            <person name="Bertero M.G."/>
            <person name="Bessieres P."/>
            <person name="Bolotin A."/>
            <person name="Borchert S."/>
            <person name="Borriss R."/>
            <person name="Boursier L."/>
            <person name="Brans A."/>
            <person name="Braun M."/>
            <person name="Brignell S.C."/>
            <person name="Bron S."/>
            <person name="Brouillet S."/>
            <person name="Bruschi C.V."/>
            <person name="Caldwell B."/>
            <person name="Capuano V."/>
            <person name="Carter N.M."/>
            <person name="Choi S.-K."/>
            <person name="Codani J.-J."/>
            <person name="Connerton I.F."/>
            <person name="Cummings N.J."/>
            <person name="Daniel R.A."/>
            <person name="Denizot F."/>
            <person name="Devine K.M."/>
            <person name="Duesterhoeft A."/>
            <person name="Ehrlich S.D."/>
            <person name="Emmerson P.T."/>
            <person name="Entian K.-D."/>
            <person name="Errington J."/>
            <person name="Fabret C."/>
            <person name="Ferrari E."/>
            <person name="Foulger D."/>
            <person name="Fritz C."/>
            <person name="Fujita M."/>
            <person name="Fujita Y."/>
            <person name="Fuma S."/>
            <person name="Galizzi A."/>
            <person name="Galleron N."/>
            <person name="Ghim S.-Y."/>
            <person name="Glaser P."/>
            <person name="Goffeau A."/>
            <person name="Golightly E.J."/>
            <person name="Grandi G."/>
            <person name="Guiseppi G."/>
            <person name="Guy B.J."/>
            <person name="Haga K."/>
            <person name="Haiech J."/>
            <person name="Harwood C.R."/>
            <person name="Henaut A."/>
            <person name="Hilbert H."/>
            <person name="Holsappel S."/>
            <person name="Hosono S."/>
            <person name="Hullo M.-F."/>
            <person name="Itaya M."/>
            <person name="Jones L.-M."/>
            <person name="Joris B."/>
            <person name="Karamata D."/>
            <person name="Kasahara Y."/>
            <person name="Klaerr-Blanchard M."/>
            <person name="Klein C."/>
            <person name="Kobayashi Y."/>
            <person name="Koetter P."/>
            <person name="Koningstein G."/>
            <person name="Krogh S."/>
            <person name="Kumano M."/>
            <person name="Kurita K."/>
            <person name="Lapidus A."/>
            <person name="Lardinois S."/>
            <person name="Lauber J."/>
            <person name="Lazarevic V."/>
            <person name="Lee S.-M."/>
            <person name="Levine A."/>
            <person name="Liu H."/>
            <person name="Masuda S."/>
            <person name="Mauel C."/>
            <person name="Medigue C."/>
            <person name="Medina N."/>
            <person name="Mellado R.P."/>
            <person name="Mizuno M."/>
            <person name="Moestl D."/>
            <person name="Nakai S."/>
            <person name="Noback M."/>
            <person name="Noone D."/>
            <person name="O'Reilly M."/>
            <person name="Ogawa K."/>
            <person name="Ogiwara A."/>
            <person name="Oudega B."/>
            <person name="Park S.-H."/>
            <person name="Parro V."/>
            <person name="Pohl T.M."/>
            <person name="Portetelle D."/>
            <person name="Porwollik S."/>
            <person name="Prescott A.M."/>
            <person name="Presecan E."/>
            <person name="Pujic P."/>
            <person name="Purnelle B."/>
            <person name="Rapoport G."/>
            <person name="Rey M."/>
            <person name="Reynolds S."/>
            <person name="Rieger M."/>
            <person name="Rivolta C."/>
            <person name="Rocha E."/>
            <person name="Roche B."/>
            <person name="Rose M."/>
            <person name="Sadaie Y."/>
            <person name="Sato T."/>
            <person name="Scanlan E."/>
            <person name="Schleich S."/>
            <person name="Schroeter R."/>
            <person name="Scoffone F."/>
            <person name="Sekiguchi J."/>
            <person name="Sekowska A."/>
            <person name="Seror S.J."/>
            <person name="Serror P."/>
            <person name="Shin B.-S."/>
            <person name="Soldo B."/>
            <person name="Sorokin A."/>
            <person name="Tacconi E."/>
            <person name="Takagi T."/>
            <person name="Takahashi H."/>
            <person name="Takemaru K."/>
            <person name="Takeuchi M."/>
            <person name="Tamakoshi A."/>
            <person name="Tanaka T."/>
            <person name="Terpstra P."/>
            <person name="Tognoni A."/>
            <person name="Tosato V."/>
            <person name="Uchiyama S."/>
            <person name="Vandenbol M."/>
            <person name="Vannier F."/>
            <person name="Vassarotti A."/>
            <person name="Viari A."/>
            <person name="Wambutt R."/>
            <person name="Wedler E."/>
            <person name="Wedler H."/>
            <person name="Weitzenegger T."/>
            <person name="Winters P."/>
            <person name="Wipat A."/>
            <person name="Yamamoto H."/>
            <person name="Yamane K."/>
            <person name="Yasumoto K."/>
            <person name="Yata K."/>
            <person name="Yoshida K."/>
            <person name="Yoshikawa H.-F."/>
            <person name="Zumstein E."/>
            <person name="Yoshikawa H."/>
            <person name="Danchin A."/>
        </authorList>
    </citation>
    <scope>NUCLEOTIDE SEQUENCE [LARGE SCALE GENOMIC DNA]</scope>
    <source>
        <strain>168</strain>
    </source>
</reference>
<reference key="3">
    <citation type="journal article" date="2009" name="J. Bacteriol.">
        <title>Characterization of YvcJ, a conserved P-loop-containing protein, and its implication in competence in Bacillus subtilis.</title>
        <authorList>
            <person name="Luciano J."/>
            <person name="Foulquier E."/>
            <person name="Fantino J.R."/>
            <person name="Galinier A."/>
            <person name="Pompeo F."/>
        </authorList>
    </citation>
    <scope>FUNCTION</scope>
    <scope>NTPASE ACTIVITY</scope>
    <scope>KINETIC PARAMETERS</scope>
    <scope>DISRUPTION PHENOTYPE</scope>
    <source>
        <strain>168</strain>
    </source>
</reference>
<feature type="chain" id="PRO_0000107689" description="Nucleotide-binding protein YvcJ">
    <location>
        <begin position="1"/>
        <end position="295"/>
    </location>
</feature>
<feature type="binding site" evidence="1">
    <location>
        <begin position="16"/>
        <end position="23"/>
    </location>
    <ligand>
        <name>ATP</name>
        <dbReference type="ChEBI" id="CHEBI:30616"/>
    </ligand>
</feature>
<feature type="binding site" evidence="1">
    <location>
        <begin position="67"/>
        <end position="70"/>
    </location>
    <ligand>
        <name>GTP</name>
        <dbReference type="ChEBI" id="CHEBI:37565"/>
    </ligand>
</feature>
<accession>O06973</accession>